<protein>
    <recommendedName>
        <fullName evidence="1">Glutamyl-tRNA(Gln) amidotransferase subunit E</fullName>
        <shortName evidence="1">Glu-ADT subunit E</shortName>
        <ecNumber evidence="1">6.3.5.-</ecNumber>
    </recommendedName>
</protein>
<dbReference type="EC" id="6.3.5.-" evidence="1"/>
<dbReference type="EMBL" id="AL445066">
    <property type="protein sequence ID" value="CAC12100.1"/>
    <property type="molecule type" value="Genomic_DNA"/>
</dbReference>
<dbReference type="RefSeq" id="WP_010901382.1">
    <property type="nucleotide sequence ID" value="NC_002578.1"/>
</dbReference>
<dbReference type="SMR" id="Q9HJJ6"/>
<dbReference type="FunCoup" id="Q9HJJ6">
    <property type="interactions" value="19"/>
</dbReference>
<dbReference type="STRING" id="273075.gene:9572189"/>
<dbReference type="PaxDb" id="273075-Ta0971"/>
<dbReference type="EnsemblBacteria" id="CAC12100">
    <property type="protein sequence ID" value="CAC12100"/>
    <property type="gene ID" value="CAC12100"/>
</dbReference>
<dbReference type="KEGG" id="tac:Ta0971"/>
<dbReference type="eggNOG" id="arCOG01719">
    <property type="taxonomic scope" value="Archaea"/>
</dbReference>
<dbReference type="HOGENOM" id="CLU_030702_0_0_2"/>
<dbReference type="InParanoid" id="Q9HJJ6"/>
<dbReference type="OrthoDB" id="7316at2157"/>
<dbReference type="Proteomes" id="UP000001024">
    <property type="component" value="Chromosome"/>
</dbReference>
<dbReference type="GO" id="GO:0005737">
    <property type="term" value="C:cytoplasm"/>
    <property type="evidence" value="ECO:0007669"/>
    <property type="project" value="InterPro"/>
</dbReference>
<dbReference type="GO" id="GO:0004812">
    <property type="term" value="F:aminoacyl-tRNA ligase activity"/>
    <property type="evidence" value="ECO:0007669"/>
    <property type="project" value="InterPro"/>
</dbReference>
<dbReference type="GO" id="GO:0005524">
    <property type="term" value="F:ATP binding"/>
    <property type="evidence" value="ECO:0007669"/>
    <property type="project" value="UniProtKB-KW"/>
</dbReference>
<dbReference type="GO" id="GO:0050567">
    <property type="term" value="F:glutaminyl-tRNA synthase (glutamine-hydrolyzing) activity"/>
    <property type="evidence" value="ECO:0007669"/>
    <property type="project" value="UniProtKB-UniRule"/>
</dbReference>
<dbReference type="GO" id="GO:0070681">
    <property type="term" value="P:glutaminyl-tRNAGln biosynthesis via transamidation"/>
    <property type="evidence" value="ECO:0007669"/>
    <property type="project" value="TreeGrafter"/>
</dbReference>
<dbReference type="GO" id="GO:0006412">
    <property type="term" value="P:translation"/>
    <property type="evidence" value="ECO:0007669"/>
    <property type="project" value="UniProtKB-UniRule"/>
</dbReference>
<dbReference type="Gene3D" id="3.30.1360.30">
    <property type="entry name" value="GAD-like domain"/>
    <property type="match status" value="1"/>
</dbReference>
<dbReference type="HAMAP" id="MF_00588">
    <property type="entry name" value="GatE"/>
    <property type="match status" value="1"/>
</dbReference>
<dbReference type="InterPro" id="IPR017959">
    <property type="entry name" value="Asn/Gln-tRNA_amidoTrfase_suB/E"/>
</dbReference>
<dbReference type="InterPro" id="IPR006075">
    <property type="entry name" value="Asn/Gln-tRNA_Trfase_suB/E_cat"/>
</dbReference>
<dbReference type="InterPro" id="IPR004115">
    <property type="entry name" value="GAD-like_sf"/>
</dbReference>
<dbReference type="InterPro" id="IPR004414">
    <property type="entry name" value="GatE"/>
</dbReference>
<dbReference type="InterPro" id="IPR017958">
    <property type="entry name" value="Gln-tRNA_amidoTrfase_suB_CS"/>
</dbReference>
<dbReference type="InterPro" id="IPR014746">
    <property type="entry name" value="Gln_synth/guanido_kin_cat_dom"/>
</dbReference>
<dbReference type="NCBIfam" id="TIGR00134">
    <property type="entry name" value="gatE_arch"/>
    <property type="match status" value="1"/>
</dbReference>
<dbReference type="NCBIfam" id="NF003107">
    <property type="entry name" value="PRK04028.1"/>
    <property type="match status" value="1"/>
</dbReference>
<dbReference type="PANTHER" id="PTHR11659">
    <property type="entry name" value="GLUTAMYL-TRNA GLN AMIDOTRANSFERASE SUBUNIT B MITOCHONDRIAL AND PROKARYOTIC PET112-RELATED"/>
    <property type="match status" value="1"/>
</dbReference>
<dbReference type="PANTHER" id="PTHR11659:SF2">
    <property type="entry name" value="GLUTAMYL-TRNA(GLN) AMIDOTRANSFERASE SUBUNIT E"/>
    <property type="match status" value="1"/>
</dbReference>
<dbReference type="Pfam" id="PF02934">
    <property type="entry name" value="GatB_N"/>
    <property type="match status" value="1"/>
</dbReference>
<dbReference type="SUPFAM" id="SSF55261">
    <property type="entry name" value="GAD domain-like"/>
    <property type="match status" value="1"/>
</dbReference>
<dbReference type="SUPFAM" id="SSF55931">
    <property type="entry name" value="Glutamine synthetase/guanido kinase"/>
    <property type="match status" value="1"/>
</dbReference>
<dbReference type="PROSITE" id="PS01234">
    <property type="entry name" value="GATB"/>
    <property type="match status" value="1"/>
</dbReference>
<reference key="1">
    <citation type="journal article" date="2000" name="Nature">
        <title>The genome sequence of the thermoacidophilic scavenger Thermoplasma acidophilum.</title>
        <authorList>
            <person name="Ruepp A."/>
            <person name="Graml W."/>
            <person name="Santos-Martinez M.-L."/>
            <person name="Koretke K.K."/>
            <person name="Volker C."/>
            <person name="Mewes H.-W."/>
            <person name="Frishman D."/>
            <person name="Stocker S."/>
            <person name="Lupas A.N."/>
            <person name="Baumeister W."/>
        </authorList>
    </citation>
    <scope>NUCLEOTIDE SEQUENCE [LARGE SCALE GENOMIC DNA]</scope>
    <source>
        <strain>ATCC 25905 / DSM 1728 / JCM 9062 / NBRC 15155 / AMRC-C165</strain>
    </source>
</reference>
<keyword id="KW-0067">ATP-binding</keyword>
<keyword id="KW-0436">Ligase</keyword>
<keyword id="KW-0547">Nucleotide-binding</keyword>
<keyword id="KW-0648">Protein biosynthesis</keyword>
<keyword id="KW-1185">Reference proteome</keyword>
<comment type="function">
    <text evidence="1">Allows the formation of correctly charged Gln-tRNA(Gln) through the transamidation of misacylated Glu-tRNA(Gln) in organisms which lack glutaminyl-tRNA synthetase. The reaction takes place in the presence of glutamine and ATP through an activated gamma-phospho-Glu-tRNA(Gln). The GatDE system is specific for glutamate and does not act on aspartate.</text>
</comment>
<comment type="catalytic activity">
    <reaction evidence="1">
        <text>L-glutamyl-tRNA(Gln) + L-glutamine + ATP + H2O = L-glutaminyl-tRNA(Gln) + L-glutamate + ADP + phosphate + H(+)</text>
        <dbReference type="Rhea" id="RHEA:17521"/>
        <dbReference type="Rhea" id="RHEA-COMP:9681"/>
        <dbReference type="Rhea" id="RHEA-COMP:9684"/>
        <dbReference type="ChEBI" id="CHEBI:15377"/>
        <dbReference type="ChEBI" id="CHEBI:15378"/>
        <dbReference type="ChEBI" id="CHEBI:29985"/>
        <dbReference type="ChEBI" id="CHEBI:30616"/>
        <dbReference type="ChEBI" id="CHEBI:43474"/>
        <dbReference type="ChEBI" id="CHEBI:58359"/>
        <dbReference type="ChEBI" id="CHEBI:78520"/>
        <dbReference type="ChEBI" id="CHEBI:78521"/>
        <dbReference type="ChEBI" id="CHEBI:456216"/>
    </reaction>
</comment>
<comment type="subunit">
    <text evidence="1">Heterodimer of GatD and GatE.</text>
</comment>
<comment type="similarity">
    <text evidence="1">Belongs to the GatB/GatE family. GatE subfamily.</text>
</comment>
<evidence type="ECO:0000255" key="1">
    <source>
        <dbReference type="HAMAP-Rule" id="MF_00588"/>
    </source>
</evidence>
<gene>
    <name evidence="1" type="primary">gatE</name>
    <name type="ordered locus">Ta0971</name>
</gene>
<feature type="chain" id="PRO_0000140084" description="Glutamyl-tRNA(Gln) amidotransferase subunit E">
    <location>
        <begin position="1"/>
        <end position="603"/>
    </location>
</feature>
<sequence>MDTKIGLEVHFQLNTGKLFCRCPVEQSSGELMRFSRKLHISASELGNIDAAASYESMRSRSFQYVVTDNSCLVEMDEEPPKTPDERAIATAISVSKALNCDIVDHITYMRKIVIDGSNTTGFQRTAIVGINGHIETSKGPVRISTVCLEEDAARKIEEIGNTVVYSLDRLGIPLIEISTEPDIVDEDHAVEVARSIGYIVISTGNARHAVDAVRQDVNFSMGYGRVEIKGVSKLTQIRDVIRYEKERQENLRAAVDLIKSRGGLDRVSFNLKDVSDLFAGTKSKIIRSGIESGGVYAGILKNMAGTLKNGKLRMGKEIADLVRSYGIKGVMHSDELPGYGLTQDEVEALYRYLGKGDNDAVLLIAINQSRVKMIENSIFDRIQKIISMDLSETRGPAGEETVFLRPMPGKDRMYPETDIPVIKVDSKLMEMSSSIKPRTYAEVVQDLVDRYGISKQNAEYIASEMVVDAFRNIAEFVEAREAARILTQIVPDLERRTKKIIDHDRIIELCRRSKDLHFDRYQLEMALEILYERDDVASVLGDSRLKELSREEIKSIIREILSSGRNATQNSIIALIKEKTERVFDPRVAMECFNEVKNKNNVF</sequence>
<proteinExistence type="inferred from homology"/>
<name>GATE_THEAC</name>
<accession>Q9HJJ6</accession>
<organism>
    <name type="scientific">Thermoplasma acidophilum (strain ATCC 25905 / DSM 1728 / JCM 9062 / NBRC 15155 / AMRC-C165)</name>
    <dbReference type="NCBI Taxonomy" id="273075"/>
    <lineage>
        <taxon>Archaea</taxon>
        <taxon>Methanobacteriati</taxon>
        <taxon>Thermoplasmatota</taxon>
        <taxon>Thermoplasmata</taxon>
        <taxon>Thermoplasmatales</taxon>
        <taxon>Thermoplasmataceae</taxon>
        <taxon>Thermoplasma</taxon>
    </lineage>
</organism>